<dbReference type="EMBL" id="X04152">
    <property type="protein sequence ID" value="CAA27770.1"/>
    <property type="molecule type" value="Genomic_DNA"/>
</dbReference>
<dbReference type="EMBL" id="X04198">
    <property type="protein sequence ID" value="CAA27770.1"/>
    <property type="status" value="JOINED"/>
    <property type="molecule type" value="Genomic_DNA"/>
</dbReference>
<dbReference type="EMBL" id="BC116088">
    <property type="protein sequence ID" value="AAI16089.1"/>
    <property type="molecule type" value="mRNA"/>
</dbReference>
<dbReference type="PIR" id="A25470">
    <property type="entry name" value="A25470"/>
</dbReference>
<dbReference type="RefSeq" id="NP_001015600.1">
    <property type="nucleotide sequence ID" value="NM_001015600.4"/>
</dbReference>
<dbReference type="SMR" id="P08728"/>
<dbReference type="FunCoup" id="P08728">
    <property type="interactions" value="298"/>
</dbReference>
<dbReference type="STRING" id="9913.ENSBTAP00000006450"/>
<dbReference type="PaxDb" id="9913-ENSBTAP00000006450"/>
<dbReference type="PeptideAtlas" id="P08728"/>
<dbReference type="GeneID" id="514812"/>
<dbReference type="KEGG" id="bta:514812"/>
<dbReference type="CTD" id="3880"/>
<dbReference type="VEuPathDB" id="HostDB:ENSBTAG00000004905"/>
<dbReference type="eggNOG" id="ENOG502QV0B">
    <property type="taxonomic scope" value="Eukaryota"/>
</dbReference>
<dbReference type="HOGENOM" id="CLU_012560_8_1_1"/>
<dbReference type="InParanoid" id="P08728"/>
<dbReference type="OMA" id="DQESWFN"/>
<dbReference type="OrthoDB" id="2441647at2759"/>
<dbReference type="TreeFam" id="TF332742"/>
<dbReference type="Reactome" id="R-BTA-6805567">
    <property type="pathway name" value="Keratinization"/>
</dbReference>
<dbReference type="Reactome" id="R-BTA-6809371">
    <property type="pathway name" value="Formation of the cornified envelope"/>
</dbReference>
<dbReference type="Proteomes" id="UP000009136">
    <property type="component" value="Chromosome 19"/>
</dbReference>
<dbReference type="Bgee" id="ENSBTAG00000004905">
    <property type="expression patterns" value="Expressed in placenta and 102 other cell types or tissues"/>
</dbReference>
<dbReference type="GO" id="GO:0005856">
    <property type="term" value="C:cytoskeleton"/>
    <property type="evidence" value="ECO:0000318"/>
    <property type="project" value="GO_Central"/>
</dbReference>
<dbReference type="GO" id="GO:0005882">
    <property type="term" value="C:intermediate filament"/>
    <property type="evidence" value="ECO:0007669"/>
    <property type="project" value="UniProtKB-KW"/>
</dbReference>
<dbReference type="GO" id="GO:0005198">
    <property type="term" value="F:structural molecule activity"/>
    <property type="evidence" value="ECO:0007669"/>
    <property type="project" value="InterPro"/>
</dbReference>
<dbReference type="GO" id="GO:0030855">
    <property type="term" value="P:epithelial cell differentiation"/>
    <property type="evidence" value="ECO:0000318"/>
    <property type="project" value="GO_Central"/>
</dbReference>
<dbReference type="GO" id="GO:0045109">
    <property type="term" value="P:intermediate filament organization"/>
    <property type="evidence" value="ECO:0000318"/>
    <property type="project" value="GO_Central"/>
</dbReference>
<dbReference type="FunFam" id="1.20.5.1160:FF:000002">
    <property type="entry name" value="Type I keratin 10"/>
    <property type="match status" value="1"/>
</dbReference>
<dbReference type="FunFam" id="1.20.5.170:FF:000002">
    <property type="entry name" value="Type I keratin KA11"/>
    <property type="match status" value="1"/>
</dbReference>
<dbReference type="FunFam" id="1.20.5.500:FF:000001">
    <property type="entry name" value="Type II keratin 23"/>
    <property type="match status" value="1"/>
</dbReference>
<dbReference type="Gene3D" id="1.20.5.170">
    <property type="match status" value="1"/>
</dbReference>
<dbReference type="Gene3D" id="1.20.5.500">
    <property type="entry name" value="Single helix bin"/>
    <property type="match status" value="1"/>
</dbReference>
<dbReference type="Gene3D" id="1.20.5.1160">
    <property type="entry name" value="Vasodilator-stimulated phosphoprotein"/>
    <property type="match status" value="1"/>
</dbReference>
<dbReference type="InterPro" id="IPR018039">
    <property type="entry name" value="IF_conserved"/>
</dbReference>
<dbReference type="InterPro" id="IPR039008">
    <property type="entry name" value="IF_rod_dom"/>
</dbReference>
<dbReference type="InterPro" id="IPR002957">
    <property type="entry name" value="Keratin_I"/>
</dbReference>
<dbReference type="PANTHER" id="PTHR23239">
    <property type="entry name" value="INTERMEDIATE FILAMENT"/>
    <property type="match status" value="1"/>
</dbReference>
<dbReference type="PANTHER" id="PTHR23239:SF14">
    <property type="entry name" value="KERATIN, TYPE I CYTOSKELETAL 19"/>
    <property type="match status" value="1"/>
</dbReference>
<dbReference type="Pfam" id="PF00038">
    <property type="entry name" value="Filament"/>
    <property type="match status" value="1"/>
</dbReference>
<dbReference type="PRINTS" id="PR01248">
    <property type="entry name" value="TYPE1KERATIN"/>
</dbReference>
<dbReference type="SMART" id="SM01391">
    <property type="entry name" value="Filament"/>
    <property type="match status" value="1"/>
</dbReference>
<dbReference type="SUPFAM" id="SSF64593">
    <property type="entry name" value="Intermediate filament protein, coiled coil region"/>
    <property type="match status" value="2"/>
</dbReference>
<dbReference type="PROSITE" id="PS00226">
    <property type="entry name" value="IF_ROD_1"/>
    <property type="match status" value="1"/>
</dbReference>
<dbReference type="PROSITE" id="PS51842">
    <property type="entry name" value="IF_ROD_2"/>
    <property type="match status" value="1"/>
</dbReference>
<name>K1C19_BOVIN</name>
<reference key="1">
    <citation type="journal article" date="1986" name="EMBO J.">
        <title>Amino acid sequence and gene organization of cytokeratin no. 19, an exceptional tail-less intermediate filament protein.</title>
        <authorList>
            <person name="Bader B.L."/>
            <person name="Magin T.M."/>
            <person name="Hatzfeld M."/>
            <person name="Franke W.W."/>
        </authorList>
    </citation>
    <scope>NUCLEOTIDE SEQUENCE [GENOMIC DNA]</scope>
    <source>
        <tissue>Urinary bladder urothelium</tissue>
    </source>
</reference>
<reference key="2">
    <citation type="submission" date="2006-05" db="EMBL/GenBank/DDBJ databases">
        <authorList>
            <consortium name="NIH - Mammalian Gene Collection (MGC) project"/>
        </authorList>
    </citation>
    <scope>NUCLEOTIDE SEQUENCE [LARGE SCALE MRNA]</scope>
    <source>
        <strain>Hereford</strain>
        <tissue>Ascending colon</tissue>
    </source>
</reference>
<evidence type="ECO:0000250" key="1"/>
<evidence type="ECO:0000250" key="2">
    <source>
        <dbReference type="UniProtKB" id="P08727"/>
    </source>
</evidence>
<evidence type="ECO:0000250" key="3">
    <source>
        <dbReference type="UniProtKB" id="P19001"/>
    </source>
</evidence>
<evidence type="ECO:0000250" key="4">
    <source>
        <dbReference type="UniProtKB" id="Q63279"/>
    </source>
</evidence>
<evidence type="ECO:0000255" key="5">
    <source>
        <dbReference type="PROSITE-ProRule" id="PRU01188"/>
    </source>
</evidence>
<sequence>MTSYSYRQSSSTSSFGGMGGGSMRFGAGGAFRAPSIHGGSGGRGVSVSSARFVSSSSGGYGGGYGGALATSDGLLAGNEKLTMQNLNDRLASYLEKVRALEEANGDLEVKIRDWYQKQGPGPARDYSHYFKTIEDLRDQILGATIENSKIVLQIDNARLAADDFRTKFETEQALRMSVEADINGLRRVLDELTLARTDLEMQIEGLKEELAYLKKNHEEEMSVLKGQVGGQVSVEVDSAPGIDLAKILSDMRSQYEVIAEKNRKDAEAWFISQTEELNREVAGHTEQLQISKTEVTDLRRTLQGLEIELQSQLSMKAALEGTLAETEARFGAQLAQIQALISGIEAQLSDVRADTERQNQEYQHLMDIKTRLEQEIATYRNLLEGQDAYFNDLSLAKAL</sequence>
<organism>
    <name type="scientific">Bos taurus</name>
    <name type="common">Bovine</name>
    <dbReference type="NCBI Taxonomy" id="9913"/>
    <lineage>
        <taxon>Eukaryota</taxon>
        <taxon>Metazoa</taxon>
        <taxon>Chordata</taxon>
        <taxon>Craniata</taxon>
        <taxon>Vertebrata</taxon>
        <taxon>Euteleostomi</taxon>
        <taxon>Mammalia</taxon>
        <taxon>Eutheria</taxon>
        <taxon>Laurasiatheria</taxon>
        <taxon>Artiodactyla</taxon>
        <taxon>Ruminantia</taxon>
        <taxon>Pecora</taxon>
        <taxon>Bovidae</taxon>
        <taxon>Bovinae</taxon>
        <taxon>Bos</taxon>
    </lineage>
</organism>
<comment type="function">
    <text evidence="1">Involved in the organization of myofibers. Together with KRT8, helps to link the contractile apparatus to dystrophin at the costameres of striated muscle (By similarity).</text>
</comment>
<comment type="subunit">
    <text evidence="1">Heterotetramer of two type I and two type II keratins. Interacts with PNN and the actin-binding domain of DMD (By similarity).</text>
</comment>
<comment type="domain">
    <text>This keratin differs from all other IF proteins in lacking the C-terminal tail domain.</text>
</comment>
<comment type="miscellaneous">
    <text>There are two types of cytoskeletal and microfibrillar keratin: I (acidic; 40-55 kDa) and II (neutral to basic; 56-70 kDa).</text>
</comment>
<comment type="similarity">
    <text evidence="5">Belongs to the intermediate filament family.</text>
</comment>
<protein>
    <recommendedName>
        <fullName>Keratin, type I cytoskeletal 19</fullName>
    </recommendedName>
    <alternativeName>
        <fullName>Cytokeratin-19</fullName>
        <shortName>CK-19</shortName>
    </alternativeName>
    <alternativeName>
        <fullName>Keratin-19</fullName>
        <shortName>K19</shortName>
    </alternativeName>
</protein>
<keyword id="KW-0175">Coiled coil</keyword>
<keyword id="KW-0403">Intermediate filament</keyword>
<keyword id="KW-0416">Keratin</keyword>
<keyword id="KW-0488">Methylation</keyword>
<keyword id="KW-0597">Phosphoprotein</keyword>
<keyword id="KW-1185">Reference proteome</keyword>
<feature type="chain" id="PRO_0000063670" description="Keratin, type I cytoskeletal 19">
    <location>
        <begin position="1"/>
        <end position="399"/>
    </location>
</feature>
<feature type="domain" description="IF rod" evidence="5">
    <location>
        <begin position="79"/>
        <end position="390"/>
    </location>
</feature>
<feature type="region of interest" description="Head">
    <location>
        <begin position="1"/>
        <end position="78"/>
    </location>
</feature>
<feature type="region of interest" description="Coil 1A">
    <location>
        <begin position="79"/>
        <end position="114"/>
    </location>
</feature>
<feature type="region of interest" description="Linker 1">
    <location>
        <begin position="115"/>
        <end position="132"/>
    </location>
</feature>
<feature type="region of interest" description="Coil 1B">
    <location>
        <begin position="133"/>
        <end position="224"/>
    </location>
</feature>
<feature type="region of interest" description="Linker 12">
    <location>
        <begin position="225"/>
        <end position="247"/>
    </location>
</feature>
<feature type="region of interest" description="Necessary for interaction with PNN" evidence="1">
    <location>
        <begin position="243"/>
        <end position="389"/>
    </location>
</feature>
<feature type="region of interest" description="Coil 2">
    <location>
        <begin position="248"/>
        <end position="386"/>
    </location>
</feature>
<feature type="region of interest" description="Rod-like helical tail">
    <location>
        <begin position="387"/>
        <end position="399"/>
    </location>
</feature>
<feature type="site" description="Stutter">
    <location>
        <position position="266"/>
    </location>
</feature>
<feature type="site" description="Stutter">
    <location>
        <position position="326"/>
    </location>
</feature>
<feature type="modified residue" description="Omega-N-methylarginine" evidence="2">
    <location>
        <position position="7"/>
    </location>
</feature>
<feature type="modified residue" description="Phosphoserine" evidence="2">
    <location>
        <position position="14"/>
    </location>
</feature>
<feature type="modified residue" description="Phosphoserine" evidence="2">
    <location>
        <position position="22"/>
    </location>
</feature>
<feature type="modified residue" description="Asymmetric dimethylarginine; alternate" evidence="2">
    <location>
        <position position="24"/>
    </location>
</feature>
<feature type="modified residue" description="Omega-N-methylarginine; alternate" evidence="2">
    <location>
        <position position="24"/>
    </location>
</feature>
<feature type="modified residue" description="Omega-N-methylarginine" evidence="2">
    <location>
        <position position="32"/>
    </location>
</feature>
<feature type="modified residue" description="Phosphoserine" evidence="2">
    <location>
        <position position="35"/>
    </location>
</feature>
<feature type="modified residue" description="Phosphoserine" evidence="4">
    <location>
        <position position="40"/>
    </location>
</feature>
<feature type="modified residue" description="Omega-N-methylarginine" evidence="2">
    <location>
        <position position="43"/>
    </location>
</feature>
<feature type="modified residue" description="Omega-N-methylarginine" evidence="2">
    <location>
        <position position="51"/>
    </location>
</feature>
<feature type="modified residue" description="Phosphoserine" evidence="4">
    <location>
        <position position="57"/>
    </location>
</feature>
<feature type="modified residue" description="Phosphoserine" evidence="3">
    <location>
        <position position="71"/>
    </location>
</feature>
<feature type="modified residue" description="Phosphothreonine" evidence="2">
    <location>
        <position position="322"/>
    </location>
</feature>
<feature type="modified residue" description="Phosphoserine" evidence="2">
    <location>
        <position position="394"/>
    </location>
</feature>
<proteinExistence type="evidence at transcript level"/>
<accession>P08728</accession>
<accession>Q1JQB4</accession>
<gene>
    <name type="primary">KRT19</name>
</gene>